<feature type="chain" id="PRO_0000054005" description="Voltage-gated inwardly rectifying potassium channel KCNH3">
    <location>
        <begin position="1"/>
        <end position="1083"/>
    </location>
</feature>
<feature type="topological domain" description="Cytoplasmic" evidence="3">
    <location>
        <begin position="1"/>
        <end position="228"/>
    </location>
</feature>
<feature type="transmembrane region" description="Helical; Name=Segment S1" evidence="3">
    <location>
        <begin position="229"/>
        <end position="249"/>
    </location>
</feature>
<feature type="topological domain" description="Extracellular" evidence="3">
    <location>
        <begin position="250"/>
        <end position="259"/>
    </location>
</feature>
<feature type="transmembrane region" description="Helical; Name=Segment S2" evidence="3">
    <location>
        <begin position="260"/>
        <end position="280"/>
    </location>
</feature>
<feature type="topological domain" description="Cytoplasmic" evidence="3">
    <location>
        <begin position="281"/>
        <end position="302"/>
    </location>
</feature>
<feature type="transmembrane region" description="Helical; Name=Segment S3" evidence="3">
    <location>
        <begin position="303"/>
        <end position="323"/>
    </location>
</feature>
<feature type="topological domain" description="Extracellular" evidence="3">
    <location>
        <begin position="324"/>
        <end position="331"/>
    </location>
</feature>
<feature type="transmembrane region" description="Helical; Voltage-sensor; Name=Segment S4" evidence="3">
    <location>
        <begin position="332"/>
        <end position="352"/>
    </location>
</feature>
<feature type="topological domain" description="Cytoplasmic" evidence="3">
    <location>
        <begin position="353"/>
        <end position="361"/>
    </location>
</feature>
<feature type="transmembrane region" description="Helical; Name=Segment S5" evidence="3">
    <location>
        <begin position="362"/>
        <end position="382"/>
    </location>
</feature>
<feature type="topological domain" description="Extracellular" evidence="3">
    <location>
        <begin position="383"/>
        <end position="453"/>
    </location>
</feature>
<feature type="intramembrane region" description="Pore-forming; Name=Segment H5" evidence="3">
    <location>
        <begin position="454"/>
        <end position="474"/>
    </location>
</feature>
<feature type="topological domain" description="Extracellular" evidence="3">
    <location>
        <begin position="475"/>
        <end position="479"/>
    </location>
</feature>
<feature type="transmembrane region" description="Helical; Name=Segment S6" evidence="3">
    <location>
        <begin position="480"/>
        <end position="500"/>
    </location>
</feature>
<feature type="topological domain" description="Cytoplasmic" evidence="3">
    <location>
        <begin position="501"/>
        <end position="1083"/>
    </location>
</feature>
<feature type="domain" description="PAS" evidence="4">
    <location>
        <begin position="18"/>
        <end position="90"/>
    </location>
</feature>
<feature type="domain" description="PAC" evidence="5">
    <location>
        <begin position="93"/>
        <end position="145"/>
    </location>
</feature>
<feature type="region of interest" description="Disordered" evidence="6">
    <location>
        <begin position="137"/>
        <end position="157"/>
    </location>
</feature>
<feature type="region of interest" description="Disordered" evidence="6">
    <location>
        <begin position="729"/>
        <end position="810"/>
    </location>
</feature>
<feature type="region of interest" description="Disordered" evidence="6">
    <location>
        <begin position="832"/>
        <end position="873"/>
    </location>
</feature>
<feature type="region of interest" description="Disordered" evidence="6">
    <location>
        <begin position="972"/>
        <end position="1055"/>
    </location>
</feature>
<feature type="short sequence motif" description="Selectivity filter" evidence="1">
    <location>
        <begin position="465"/>
        <end position="470"/>
    </location>
</feature>
<feature type="compositionally biased region" description="Basic and acidic residues" evidence="6">
    <location>
        <begin position="137"/>
        <end position="150"/>
    </location>
</feature>
<feature type="compositionally biased region" description="Basic residues" evidence="6">
    <location>
        <begin position="773"/>
        <end position="785"/>
    </location>
</feature>
<feature type="compositionally biased region" description="Low complexity" evidence="6">
    <location>
        <begin position="844"/>
        <end position="861"/>
    </location>
</feature>
<feature type="binding site">
    <location>
        <begin position="582"/>
        <end position="697"/>
    </location>
    <ligand>
        <name>a nucleoside 3',5'-cyclic phosphate</name>
        <dbReference type="ChEBI" id="CHEBI:58464"/>
    </ligand>
</feature>
<feature type="glycosylation site" description="N-linked (GlcNAc...) asparagine" evidence="3">
    <location>
        <position position="421"/>
    </location>
</feature>
<feature type="glycosylation site" description="N-linked (GlcNAc...) asparagine" evidence="3">
    <location>
        <position position="428"/>
    </location>
</feature>
<feature type="glycosylation site" description="N-linked (GlcNAc...) asparagine" evidence="3">
    <location>
        <position position="436"/>
    </location>
</feature>
<dbReference type="EMBL" id="AB022696">
    <property type="protein sequence ID" value="BAA83590.1"/>
    <property type="molecule type" value="mRNA"/>
</dbReference>
<dbReference type="EMBL" id="AB033108">
    <property type="protein sequence ID" value="BAA86596.1"/>
    <property type="status" value="ALT_INIT"/>
    <property type="molecule type" value="mRNA"/>
</dbReference>
<dbReference type="CCDS" id="CCDS8786.1"/>
<dbReference type="RefSeq" id="NP_001300959.1">
    <property type="nucleotide sequence ID" value="NM_001314030.1"/>
</dbReference>
<dbReference type="RefSeq" id="NP_036416.1">
    <property type="nucleotide sequence ID" value="NM_012284.3"/>
</dbReference>
<dbReference type="SMR" id="Q9ULD8"/>
<dbReference type="BioGRID" id="116988">
    <property type="interactions" value="4"/>
</dbReference>
<dbReference type="CORUM" id="Q9ULD8"/>
<dbReference type="FunCoup" id="Q9ULD8">
    <property type="interactions" value="409"/>
</dbReference>
<dbReference type="IntAct" id="Q9ULD8">
    <property type="interactions" value="3"/>
</dbReference>
<dbReference type="MINT" id="Q9ULD8"/>
<dbReference type="STRING" id="9606.ENSP00000257981"/>
<dbReference type="ChEMBL" id="CHEMBL2363017"/>
<dbReference type="DrugBank" id="DB00228">
    <property type="generic name" value="Enflurane"/>
</dbReference>
<dbReference type="DrugBank" id="DB01110">
    <property type="generic name" value="Miconazole"/>
</dbReference>
<dbReference type="DrugBank" id="DB01069">
    <property type="generic name" value="Promethazine"/>
</dbReference>
<dbReference type="DrugCentral" id="Q9ULD8"/>
<dbReference type="GuidetoPHARMACOLOGY" id="576"/>
<dbReference type="TCDB" id="1.A.1.20.5">
    <property type="family name" value="the voltage-gated ion channel (vic) superfamily"/>
</dbReference>
<dbReference type="GlyCosmos" id="Q9ULD8">
    <property type="glycosylation" value="3 sites, No reported glycans"/>
</dbReference>
<dbReference type="GlyGen" id="Q9ULD8">
    <property type="glycosylation" value="6 sites, 1 O-linked glycan (1 site)"/>
</dbReference>
<dbReference type="iPTMnet" id="Q9ULD8"/>
<dbReference type="PhosphoSitePlus" id="Q9ULD8"/>
<dbReference type="BioMuta" id="KCNH3"/>
<dbReference type="DMDM" id="26006814"/>
<dbReference type="jPOST" id="Q9ULD8"/>
<dbReference type="MassIVE" id="Q9ULD8"/>
<dbReference type="PaxDb" id="9606-ENSP00000257981"/>
<dbReference type="PeptideAtlas" id="Q9ULD8"/>
<dbReference type="ProteomicsDB" id="85003"/>
<dbReference type="Antibodypedia" id="25968">
    <property type="antibodies" value="92 antibodies from 20 providers"/>
</dbReference>
<dbReference type="DNASU" id="23416"/>
<dbReference type="Ensembl" id="ENST00000257981.7">
    <property type="protein sequence ID" value="ENSP00000257981.5"/>
    <property type="gene ID" value="ENSG00000135519.8"/>
</dbReference>
<dbReference type="GeneID" id="23416"/>
<dbReference type="KEGG" id="hsa:23416"/>
<dbReference type="MANE-Select" id="ENST00000257981.7">
    <property type="protein sequence ID" value="ENSP00000257981.5"/>
    <property type="RefSeq nucleotide sequence ID" value="NM_012284.3"/>
    <property type="RefSeq protein sequence ID" value="NP_036416.1"/>
</dbReference>
<dbReference type="UCSC" id="uc001ruh.2">
    <property type="organism name" value="human"/>
</dbReference>
<dbReference type="AGR" id="HGNC:6252"/>
<dbReference type="CTD" id="23416"/>
<dbReference type="DisGeNET" id="23416"/>
<dbReference type="GeneCards" id="KCNH3"/>
<dbReference type="HGNC" id="HGNC:6252">
    <property type="gene designation" value="KCNH3"/>
</dbReference>
<dbReference type="HPA" id="ENSG00000135519">
    <property type="expression patterns" value="Group enriched (brain, pituitary gland)"/>
</dbReference>
<dbReference type="MIM" id="604527">
    <property type="type" value="gene"/>
</dbReference>
<dbReference type="neXtProt" id="NX_Q9ULD8"/>
<dbReference type="OpenTargets" id="ENSG00000135519"/>
<dbReference type="PharmGKB" id="PA30038"/>
<dbReference type="VEuPathDB" id="HostDB:ENSG00000135519"/>
<dbReference type="eggNOG" id="KOG0498">
    <property type="taxonomic scope" value="Eukaryota"/>
</dbReference>
<dbReference type="GeneTree" id="ENSGT00940000161742"/>
<dbReference type="HOGENOM" id="CLU_005746_6_0_1"/>
<dbReference type="InParanoid" id="Q9ULD8"/>
<dbReference type="OMA" id="YIGQQEI"/>
<dbReference type="OrthoDB" id="426293at2759"/>
<dbReference type="PAN-GO" id="Q9ULD8">
    <property type="GO annotations" value="4 GO annotations based on evolutionary models"/>
</dbReference>
<dbReference type="PhylomeDB" id="Q9ULD8"/>
<dbReference type="TreeFam" id="TF313130"/>
<dbReference type="PathwayCommons" id="Q9ULD8"/>
<dbReference type="Reactome" id="R-HSA-1296072">
    <property type="pathway name" value="Voltage gated Potassium channels"/>
</dbReference>
<dbReference type="SignaLink" id="Q9ULD8"/>
<dbReference type="BioGRID-ORCS" id="23416">
    <property type="hits" value="26 hits in 1155 CRISPR screens"/>
</dbReference>
<dbReference type="ChiTaRS" id="KCNH3">
    <property type="organism name" value="human"/>
</dbReference>
<dbReference type="GeneWiki" id="KCNH3"/>
<dbReference type="GenomeRNAi" id="23416"/>
<dbReference type="Pharos" id="Q9ULD8">
    <property type="development level" value="Tclin"/>
</dbReference>
<dbReference type="PRO" id="PR:Q9ULD8"/>
<dbReference type="Proteomes" id="UP000005640">
    <property type="component" value="Chromosome 12"/>
</dbReference>
<dbReference type="RNAct" id="Q9ULD8">
    <property type="molecule type" value="protein"/>
</dbReference>
<dbReference type="Bgee" id="ENSG00000135519">
    <property type="expression patterns" value="Expressed in right frontal lobe and 119 other cell types or tissues"/>
</dbReference>
<dbReference type="ExpressionAtlas" id="Q9ULD8">
    <property type="expression patterns" value="baseline and differential"/>
</dbReference>
<dbReference type="GO" id="GO:0016020">
    <property type="term" value="C:membrane"/>
    <property type="evidence" value="ECO:0000303"/>
    <property type="project" value="UniProtKB"/>
</dbReference>
<dbReference type="GO" id="GO:0034702">
    <property type="term" value="C:monoatomic ion channel complex"/>
    <property type="evidence" value="ECO:0007669"/>
    <property type="project" value="UniProtKB-KW"/>
</dbReference>
<dbReference type="GO" id="GO:0005886">
    <property type="term" value="C:plasma membrane"/>
    <property type="evidence" value="ECO:0000318"/>
    <property type="project" value="GO_Central"/>
</dbReference>
<dbReference type="GO" id="GO:0005242">
    <property type="term" value="F:inward rectifier potassium channel activity"/>
    <property type="evidence" value="ECO:0000314"/>
    <property type="project" value="UniProtKB"/>
</dbReference>
<dbReference type="GO" id="GO:0005249">
    <property type="term" value="F:voltage-gated potassium channel activity"/>
    <property type="evidence" value="ECO:0000318"/>
    <property type="project" value="GO_Central"/>
</dbReference>
<dbReference type="GO" id="GO:0071805">
    <property type="term" value="P:potassium ion transmembrane transport"/>
    <property type="evidence" value="ECO:0000318"/>
    <property type="project" value="GO_Central"/>
</dbReference>
<dbReference type="GO" id="GO:0006813">
    <property type="term" value="P:potassium ion transport"/>
    <property type="evidence" value="ECO:0000314"/>
    <property type="project" value="UniProtKB"/>
</dbReference>
<dbReference type="GO" id="GO:0042391">
    <property type="term" value="P:regulation of membrane potential"/>
    <property type="evidence" value="ECO:0000318"/>
    <property type="project" value="GO_Central"/>
</dbReference>
<dbReference type="CDD" id="cd00038">
    <property type="entry name" value="CAP_ED"/>
    <property type="match status" value="1"/>
</dbReference>
<dbReference type="CDD" id="cd00130">
    <property type="entry name" value="PAS"/>
    <property type="match status" value="1"/>
</dbReference>
<dbReference type="FunFam" id="2.60.120.10:FF:000061">
    <property type="entry name" value="Potassium voltage-gated channel subfamily H member 3"/>
    <property type="match status" value="1"/>
</dbReference>
<dbReference type="FunFam" id="3.30.450.20:FF:000001">
    <property type="entry name" value="Potassium voltage-gated channel subfamily H member 7"/>
    <property type="match status" value="1"/>
</dbReference>
<dbReference type="FunFam" id="1.10.1200.260:FF:000002">
    <property type="entry name" value="Potassium voltage-gated channel subfamily H member 8"/>
    <property type="match status" value="1"/>
</dbReference>
<dbReference type="Gene3D" id="1.10.1200.260">
    <property type="match status" value="1"/>
</dbReference>
<dbReference type="Gene3D" id="1.10.287.70">
    <property type="match status" value="1"/>
</dbReference>
<dbReference type="Gene3D" id="2.60.120.10">
    <property type="entry name" value="Jelly Rolls"/>
    <property type="match status" value="1"/>
</dbReference>
<dbReference type="Gene3D" id="3.30.450.20">
    <property type="entry name" value="PAS domain"/>
    <property type="match status" value="1"/>
</dbReference>
<dbReference type="InterPro" id="IPR000595">
    <property type="entry name" value="cNMP-bd_dom"/>
</dbReference>
<dbReference type="InterPro" id="IPR018490">
    <property type="entry name" value="cNMP-bd_dom_sf"/>
</dbReference>
<dbReference type="InterPro" id="IPR005821">
    <property type="entry name" value="Ion_trans_dom"/>
</dbReference>
<dbReference type="InterPro" id="IPR003938">
    <property type="entry name" value="K_chnl_volt-dep_EAG/ELK/ERG"/>
</dbReference>
<dbReference type="InterPro" id="IPR003950">
    <property type="entry name" value="K_chnl_volt-dep_ELK"/>
</dbReference>
<dbReference type="InterPro" id="IPR050818">
    <property type="entry name" value="KCNH_animal-type"/>
</dbReference>
<dbReference type="InterPro" id="IPR001610">
    <property type="entry name" value="PAC"/>
</dbReference>
<dbReference type="InterPro" id="IPR000014">
    <property type="entry name" value="PAS"/>
</dbReference>
<dbReference type="InterPro" id="IPR000700">
    <property type="entry name" value="PAS-assoc_C"/>
</dbReference>
<dbReference type="InterPro" id="IPR035965">
    <property type="entry name" value="PAS-like_dom_sf"/>
</dbReference>
<dbReference type="InterPro" id="IPR014710">
    <property type="entry name" value="RmlC-like_jellyroll"/>
</dbReference>
<dbReference type="NCBIfam" id="TIGR00229">
    <property type="entry name" value="sensory_box"/>
    <property type="match status" value="1"/>
</dbReference>
<dbReference type="PANTHER" id="PTHR10217:SF481">
    <property type="entry name" value="POTASSIUM VOLTAGE-GATED CHANNEL SUBFAMILY H MEMBER 3"/>
    <property type="match status" value="1"/>
</dbReference>
<dbReference type="PANTHER" id="PTHR10217">
    <property type="entry name" value="VOLTAGE AND LIGAND GATED POTASSIUM CHANNEL"/>
    <property type="match status" value="1"/>
</dbReference>
<dbReference type="Pfam" id="PF00027">
    <property type="entry name" value="cNMP_binding"/>
    <property type="match status" value="1"/>
</dbReference>
<dbReference type="Pfam" id="PF00520">
    <property type="entry name" value="Ion_trans"/>
    <property type="match status" value="1"/>
</dbReference>
<dbReference type="Pfam" id="PF13426">
    <property type="entry name" value="PAS_9"/>
    <property type="match status" value="1"/>
</dbReference>
<dbReference type="PRINTS" id="PR01463">
    <property type="entry name" value="EAGCHANLFMLY"/>
</dbReference>
<dbReference type="PRINTS" id="PR01465">
    <property type="entry name" value="ELKCHANNEL"/>
</dbReference>
<dbReference type="SMART" id="SM00100">
    <property type="entry name" value="cNMP"/>
    <property type="match status" value="1"/>
</dbReference>
<dbReference type="SMART" id="SM00086">
    <property type="entry name" value="PAC"/>
    <property type="match status" value="1"/>
</dbReference>
<dbReference type="SUPFAM" id="SSF51206">
    <property type="entry name" value="cAMP-binding domain-like"/>
    <property type="match status" value="1"/>
</dbReference>
<dbReference type="SUPFAM" id="SSF55785">
    <property type="entry name" value="PYP-like sensor domain (PAS domain)"/>
    <property type="match status" value="1"/>
</dbReference>
<dbReference type="SUPFAM" id="SSF81324">
    <property type="entry name" value="Voltage-gated potassium channels"/>
    <property type="match status" value="1"/>
</dbReference>
<dbReference type="PROSITE" id="PS50042">
    <property type="entry name" value="CNMP_BINDING_3"/>
    <property type="match status" value="1"/>
</dbReference>
<dbReference type="PROSITE" id="PS50113">
    <property type="entry name" value="PAC"/>
    <property type="match status" value="1"/>
</dbReference>
<dbReference type="PROSITE" id="PS50112">
    <property type="entry name" value="PAS"/>
    <property type="match status" value="1"/>
</dbReference>
<name>KCNH3_HUMAN</name>
<protein>
    <recommendedName>
        <fullName evidence="9">Voltage-gated inwardly rectifying potassium channel KCNH3</fullName>
    </recommendedName>
    <alternativeName>
        <fullName>Brain-specific eag-like channel 1</fullName>
        <shortName evidence="8">BEC1</shortName>
    </alternativeName>
    <alternativeName>
        <fullName>Ether-a-go-go-like potassium channel 2</fullName>
        <shortName>ELK channel 2</shortName>
        <shortName>ELK2</shortName>
    </alternativeName>
    <alternativeName>
        <fullName>Potassium voltage-gated channel subfamily H member 3</fullName>
    </alternativeName>
    <alternativeName>
        <fullName>Voltage-gated potassium channel subunit Kv12.2</fullName>
    </alternativeName>
</protein>
<gene>
    <name evidence="10" type="primary">KCNH3</name>
    <name type="synonym">KIAA1282</name>
</gene>
<comment type="function">
    <text evidence="7">Pore-forming (alpha) subunit of a voltage-gated inwardly rectifying potassium channel (PubMed:10455180). Charactherized by a fast rate of activation during depolarization followed by a rapid inactivation at much more depolarized value causing inward rectification due to a C-type inactivation mechanism (PubMed:10455180). Exhibits a rapid recovery from inactivation (PubMed:10455180).</text>
</comment>
<comment type="catalytic activity">
    <reaction evidence="7">
        <text>K(+)(in) = K(+)(out)</text>
        <dbReference type="Rhea" id="RHEA:29463"/>
        <dbReference type="ChEBI" id="CHEBI:29103"/>
    </reaction>
</comment>
<comment type="subunit">
    <text evidence="2">The potassium channel is probably composed of a homo- or heterotetrameric complex of pore-forming alpha subunits that can associate with modulating beta subunits. Interacts with KCNE1 and KCNE3; these interactions regulate KCNH3 trafficking to the plasma membrane and its subsequent voltage-gated potassium channel activity.</text>
</comment>
<comment type="interaction">
    <interactant intactId="EBI-8079227">
        <id>Q9ULD8</id>
    </interactant>
    <interactant intactId="EBI-6163496">
        <id>P04578</id>
        <label>env</label>
    </interactant>
    <organismsDiffer>true</organismsDiffer>
    <experiments>3</experiments>
</comment>
<comment type="subcellular location">
    <subcellularLocation>
        <location evidence="2">Cell membrane</location>
        <topology evidence="2">Multi-pass membrane protein</topology>
    </subcellularLocation>
    <text evidence="2">Expression on the cell membrane requires at least one of the three glycosylation sites to carry a sugar chain irrespective of their positions.</text>
</comment>
<comment type="tissue specificity">
    <text evidence="7">Detected only in brain, in particular in the telencephalon (PubMed:10455180). Detected in the cerebral cortex, occipital pole, frontal and temporal lobe, putamen, amygdala, hippocampus and caudate nucleus (PubMed:10455180).</text>
</comment>
<comment type="PTM">
    <text evidence="2">N-glycosylated. N-glycosylation mediates traffick to the cell membrane but is not necessary for voltage-gated potassium channel activity.</text>
</comment>
<comment type="similarity">
    <text evidence="9">Belongs to the potassium channel family. H (Eag) (TC 1.A.1.20) subfamily. Kv12.2/KCNH3 sub-subfamily.</text>
</comment>
<comment type="sequence caution" evidence="9">
    <conflict type="erroneous initiation">
        <sequence resource="EMBL-CDS" id="BAA86596"/>
    </conflict>
    <text>Extended N-terminus.</text>
</comment>
<proteinExistence type="evidence at protein level"/>
<evidence type="ECO:0000250" key="1"/>
<evidence type="ECO:0000250" key="2">
    <source>
        <dbReference type="UniProtKB" id="Q9WVJ0"/>
    </source>
</evidence>
<evidence type="ECO:0000255" key="3"/>
<evidence type="ECO:0000255" key="4">
    <source>
        <dbReference type="PROSITE-ProRule" id="PRU00140"/>
    </source>
</evidence>
<evidence type="ECO:0000255" key="5">
    <source>
        <dbReference type="PROSITE-ProRule" id="PRU00141"/>
    </source>
</evidence>
<evidence type="ECO:0000256" key="6">
    <source>
        <dbReference type="SAM" id="MobiDB-lite"/>
    </source>
</evidence>
<evidence type="ECO:0000269" key="7">
    <source>
    </source>
</evidence>
<evidence type="ECO:0000303" key="8">
    <source>
    </source>
</evidence>
<evidence type="ECO:0000305" key="9"/>
<evidence type="ECO:0000312" key="10">
    <source>
        <dbReference type="HGNC" id="HGNC:6252"/>
    </source>
</evidence>
<accession>Q9ULD8</accession>
<accession>Q9UQ06</accession>
<reference key="1">
    <citation type="journal article" date="1999" name="J. Biol. Chem.">
        <title>New ether-a-go-go K+ channel family members localized in human telencephalon.</title>
        <authorList>
            <person name="Miyake A."/>
            <person name="Mochizuki S."/>
            <person name="Yokoi H."/>
            <person name="Kohda M."/>
            <person name="Furuichi K."/>
        </authorList>
    </citation>
    <scope>NUCLEOTIDE SEQUENCE [MRNA]</scope>
    <scope>FUNCTION</scope>
    <scope>TRANSPORTER ACTIVITY</scope>
    <scope>TISSUE SPECIFICITY</scope>
    <source>
        <tissue>Brain</tissue>
    </source>
</reference>
<reference key="2">
    <citation type="journal article" date="1999" name="DNA Res.">
        <title>Prediction of the coding sequences of unidentified human genes. XV. The complete sequences of 100 new cDNA clones from brain which code for large proteins in vitro.</title>
        <authorList>
            <person name="Nagase T."/>
            <person name="Ishikawa K."/>
            <person name="Kikuno R."/>
            <person name="Hirosawa M."/>
            <person name="Nomura N."/>
            <person name="Ohara O."/>
        </authorList>
    </citation>
    <scope>NUCLEOTIDE SEQUENCE [LARGE SCALE MRNA]</scope>
    <source>
        <tissue>Brain</tissue>
    </source>
</reference>
<sequence length="1083" mass="117129">MPAMRGLLAPQNTFLDTIATRFDGTHSNFVLGNAQVAGLFPVVYCSDGFCDLTGFSRAEVMQRGCACSFLYGPDTSELVRQQIRKALDEHKEFKAELILYRKSGLPFWCLLDVIPIKNEKGEVALFLVSHKDISETKNRGGPDRWKETGGGRRRYGRARSKGFNANRRRSRAVLYHLSGHLQKQPKGKHKLNKGVFGEKPNLPEYKVAAIRKSPFILLHCGALRATWDGFILLATLYVAVTVPYSVCVSTAREPSAARGPPSVCDLAVEVLFILDIVLNFRTTFVSKSGQVVFAPKSICLHYVTTWFLLDVIAALPFDLLHAFKVNVYFGAHLLKTVRLLRLLRLLPRLDRYSQYSAVVLTLLMAVFALLAHWVACVWFYIGQREIESSESELPEIGWLQELARRLETPYYLVGRRPAGGNSSGQSDNCSSSSEANGTGLELLGGPSLRSAYITSLYFALSSLTSVGFGNVSANTDTEKIFSICTMLIGALMHAVVFGNVTAIIQRMYARRFLYHSRTRDLRDYIRIHRIPKPLKQRMLEYFQATWAVNNGIDTTELLQSLPDELRADIAMHLHKEVLQLPLFEAASRGCLRALSLALRPAFCTPGEYLIHQGDALQALYFVCSGSMEVLKGGTVLAILGKGDLIGCELPRREQVVKANADVKGLTYCVLQCLQLAGLHDSLALYPEFAPRFSRGLRGELSYNLGAGGGSAEVDTSSLSGDNTLMSTLEEKETDGEQGPTVSPAPADEPSSPLLSPGCTSSSSAAKLLSPRRTAPRPRLGGRGRPGRAGALKAEAGPSAPPRALEGLRLPPMPWNVPPDLSPRVVDGIEDGCGSDQPKFSFRVGQSGPECSSSPSPGPESGLLTVPHGPSEARNTDTLDKLRQAVTELSEQVLQMREGLQSLRQAVQLVLAPHREGPCPRASGEGPCPASTSGLLQPLCVDTGASSYCLQPPAGSVLSGTWPHPRPGPPPLMAPWPWGPPASQSSPWPRATAFWTSTSDSEPPASGDLCSEPSTPASPPPSEEGARTGPAEPVSQAEATSTGEPPPGSGGLALPWDPHSLEMVLIGCHGSGTVQWTQEEGTGV</sequence>
<organism>
    <name type="scientific">Homo sapiens</name>
    <name type="common">Human</name>
    <dbReference type="NCBI Taxonomy" id="9606"/>
    <lineage>
        <taxon>Eukaryota</taxon>
        <taxon>Metazoa</taxon>
        <taxon>Chordata</taxon>
        <taxon>Craniata</taxon>
        <taxon>Vertebrata</taxon>
        <taxon>Euteleostomi</taxon>
        <taxon>Mammalia</taxon>
        <taxon>Eutheria</taxon>
        <taxon>Euarchontoglires</taxon>
        <taxon>Primates</taxon>
        <taxon>Haplorrhini</taxon>
        <taxon>Catarrhini</taxon>
        <taxon>Hominidae</taxon>
        <taxon>Homo</taxon>
    </lineage>
</organism>
<keyword id="KW-1003">Cell membrane</keyword>
<keyword id="KW-0325">Glycoprotein</keyword>
<keyword id="KW-0407">Ion channel</keyword>
<keyword id="KW-0406">Ion transport</keyword>
<keyword id="KW-0472">Membrane</keyword>
<keyword id="KW-0630">Potassium</keyword>
<keyword id="KW-0631">Potassium channel</keyword>
<keyword id="KW-0633">Potassium transport</keyword>
<keyword id="KW-1267">Proteomics identification</keyword>
<keyword id="KW-1185">Reference proteome</keyword>
<keyword id="KW-0812">Transmembrane</keyword>
<keyword id="KW-1133">Transmembrane helix</keyword>
<keyword id="KW-0813">Transport</keyword>
<keyword id="KW-0851">Voltage-gated channel</keyword>